<organism>
    <name type="scientific">Salmonella paratyphi C (strain RKS4594)</name>
    <dbReference type="NCBI Taxonomy" id="476213"/>
    <lineage>
        <taxon>Bacteria</taxon>
        <taxon>Pseudomonadati</taxon>
        <taxon>Pseudomonadota</taxon>
        <taxon>Gammaproteobacteria</taxon>
        <taxon>Enterobacterales</taxon>
        <taxon>Enterobacteriaceae</taxon>
        <taxon>Salmonella</taxon>
    </lineage>
</organism>
<keyword id="KW-0050">Antiport</keyword>
<keyword id="KW-0997">Cell inner membrane</keyword>
<keyword id="KW-1003">Cell membrane</keyword>
<keyword id="KW-0868">Chloride</keyword>
<keyword id="KW-0406">Ion transport</keyword>
<keyword id="KW-0472">Membrane</keyword>
<keyword id="KW-0812">Transmembrane</keyword>
<keyword id="KW-1133">Transmembrane helix</keyword>
<keyword id="KW-0813">Transport</keyword>
<feature type="chain" id="PRO_1000164072" description="H(+)/Cl(-) exchange transporter ClcA">
    <location>
        <begin position="1"/>
        <end position="473"/>
    </location>
</feature>
<feature type="topological domain" description="Cytoplasmic" evidence="1">
    <location>
        <begin position="1"/>
        <end position="32"/>
    </location>
</feature>
<feature type="transmembrane region" description="Helical" evidence="1">
    <location>
        <begin position="33"/>
        <end position="69"/>
    </location>
</feature>
<feature type="topological domain" description="Periplasmic" evidence="1">
    <location>
        <begin position="70"/>
        <end position="76"/>
    </location>
</feature>
<feature type="transmembrane region" description="Helical" evidence="1">
    <location>
        <begin position="77"/>
        <end position="100"/>
    </location>
</feature>
<feature type="intramembrane region" description="Helical" evidence="1">
    <location>
        <begin position="109"/>
        <end position="116"/>
    </location>
</feature>
<feature type="topological domain" description="Cytoplasmic" evidence="1">
    <location>
        <begin position="117"/>
        <end position="123"/>
    </location>
</feature>
<feature type="transmembrane region" description="Helical" evidence="1">
    <location>
        <begin position="124"/>
        <end position="141"/>
    </location>
</feature>
<feature type="transmembrane region" description="Helical" evidence="1">
    <location>
        <begin position="148"/>
        <end position="166"/>
    </location>
</feature>
<feature type="topological domain" description="Cytoplasmic" evidence="1">
    <location>
        <begin position="167"/>
        <end position="176"/>
    </location>
</feature>
<feature type="intramembrane region" description="Helical" evidence="1">
    <location>
        <begin position="177"/>
        <end position="189"/>
    </location>
</feature>
<feature type="intramembrane region" description="Helical" evidence="1">
    <location>
        <begin position="193"/>
        <end position="201"/>
    </location>
</feature>
<feature type="topological domain" description="Cytoplasmic" evidence="1">
    <location>
        <begin position="202"/>
        <end position="214"/>
    </location>
</feature>
<feature type="transmembrane region" description="Helical" evidence="1">
    <location>
        <begin position="215"/>
        <end position="232"/>
    </location>
</feature>
<feature type="topological domain" description="Periplasmic" evidence="1">
    <location>
        <begin position="233"/>
        <end position="252"/>
    </location>
</feature>
<feature type="transmembrane region" description="Helical" evidence="1">
    <location>
        <begin position="253"/>
        <end position="281"/>
    </location>
</feature>
<feature type="topological domain" description="Cytoplasmic" evidence="1">
    <location>
        <begin position="282"/>
        <end position="287"/>
    </location>
</feature>
<feature type="transmembrane region" description="Helical" evidence="1">
    <location>
        <begin position="288"/>
        <end position="309"/>
    </location>
</feature>
<feature type="topological domain" description="Periplasmic" evidence="1">
    <location>
        <begin position="310"/>
        <end position="329"/>
    </location>
</feature>
<feature type="transmembrane region" description="Helical" evidence="1">
    <location>
        <begin position="330"/>
        <end position="349"/>
    </location>
</feature>
<feature type="transmembrane region" description="Helical" evidence="1">
    <location>
        <begin position="355"/>
        <end position="376"/>
    </location>
</feature>
<feature type="topological domain" description="Periplasmic" evidence="1">
    <location>
        <begin position="377"/>
        <end position="386"/>
    </location>
</feature>
<feature type="intramembrane region" description="Helical" evidence="1">
    <location>
        <begin position="387"/>
        <end position="401"/>
    </location>
</feature>
<feature type="intramembrane region" description="Note=Loop between two helices" evidence="1">
    <location>
        <begin position="402"/>
        <end position="404"/>
    </location>
</feature>
<feature type="intramembrane region" description="Helical" evidence="1">
    <location>
        <begin position="405"/>
        <end position="416"/>
    </location>
</feature>
<feature type="intramembrane region" description="Note=Loop between two helices" evidence="1">
    <location>
        <begin position="417"/>
        <end position="421"/>
    </location>
</feature>
<feature type="transmembrane region" description="Helical" evidence="1">
    <location>
        <begin position="422"/>
        <end position="438"/>
    </location>
</feature>
<feature type="topological domain" description="Cytoplasmic" evidence="1">
    <location>
        <begin position="439"/>
        <end position="473"/>
    </location>
</feature>
<feature type="short sequence motif" description="Selectivity filter part_1" evidence="1">
    <location>
        <begin position="106"/>
        <end position="110"/>
    </location>
</feature>
<feature type="short sequence motif" description="Selectivity filter part_2" evidence="1">
    <location>
        <begin position="146"/>
        <end position="150"/>
    </location>
</feature>
<feature type="short sequence motif" description="Selectivity filter part_3" evidence="1">
    <location>
        <begin position="355"/>
        <end position="359"/>
    </location>
</feature>
<feature type="binding site" evidence="1">
    <location>
        <position position="107"/>
    </location>
    <ligand>
        <name>chloride</name>
        <dbReference type="ChEBI" id="CHEBI:17996"/>
    </ligand>
</feature>
<feature type="binding site" evidence="1">
    <location>
        <position position="356"/>
    </location>
    <ligand>
        <name>chloride</name>
        <dbReference type="ChEBI" id="CHEBI:17996"/>
    </ligand>
</feature>
<feature type="binding site" evidence="1">
    <location>
        <position position="357"/>
    </location>
    <ligand>
        <name>chloride</name>
        <dbReference type="ChEBI" id="CHEBI:17996"/>
    </ligand>
</feature>
<feature type="binding site" evidence="1">
    <location>
        <position position="445"/>
    </location>
    <ligand>
        <name>chloride</name>
        <dbReference type="ChEBI" id="CHEBI:17996"/>
    </ligand>
</feature>
<feature type="site" description="Mediates proton transfer from the outer aqueous phase to the interior of the protein; involved in linking H(+) and Cl(-) transport" evidence="1">
    <location>
        <position position="148"/>
    </location>
</feature>
<feature type="site" description="Mediates proton transfer from the protein to the inner aqueous phase" evidence="1">
    <location>
        <position position="203"/>
    </location>
</feature>
<reference key="1">
    <citation type="journal article" date="2009" name="PLoS ONE">
        <title>Salmonella paratyphi C: genetic divergence from Salmonella choleraesuis and pathogenic convergence with Salmonella typhi.</title>
        <authorList>
            <person name="Liu W.-Q."/>
            <person name="Feng Y."/>
            <person name="Wang Y."/>
            <person name="Zou Q.-H."/>
            <person name="Chen F."/>
            <person name="Guo J.-T."/>
            <person name="Peng Y.-H."/>
            <person name="Jin Y."/>
            <person name="Li Y.-G."/>
            <person name="Hu S.-N."/>
            <person name="Johnston R.N."/>
            <person name="Liu G.-R."/>
            <person name="Liu S.-L."/>
        </authorList>
    </citation>
    <scope>NUCLEOTIDE SEQUENCE [LARGE SCALE GENOMIC DNA]</scope>
    <source>
        <strain>RKS4594</strain>
    </source>
</reference>
<name>CLCA_SALPC</name>
<dbReference type="EMBL" id="CP000857">
    <property type="protein sequence ID" value="ACN44408.1"/>
    <property type="molecule type" value="Genomic_DNA"/>
</dbReference>
<dbReference type="RefSeq" id="WP_000845431.1">
    <property type="nucleotide sequence ID" value="NC_012125.1"/>
</dbReference>
<dbReference type="SMR" id="C0Q5R6"/>
<dbReference type="KEGG" id="sei:SPC_0219"/>
<dbReference type="HOGENOM" id="CLU_015263_7_0_6"/>
<dbReference type="Proteomes" id="UP000001599">
    <property type="component" value="Chromosome"/>
</dbReference>
<dbReference type="GO" id="GO:0005886">
    <property type="term" value="C:plasma membrane"/>
    <property type="evidence" value="ECO:0007669"/>
    <property type="project" value="UniProtKB-SubCell"/>
</dbReference>
<dbReference type="GO" id="GO:0015297">
    <property type="term" value="F:antiporter activity"/>
    <property type="evidence" value="ECO:0007669"/>
    <property type="project" value="UniProtKB-UniRule"/>
</dbReference>
<dbReference type="GO" id="GO:0005247">
    <property type="term" value="F:voltage-gated chloride channel activity"/>
    <property type="evidence" value="ECO:0007669"/>
    <property type="project" value="TreeGrafter"/>
</dbReference>
<dbReference type="CDD" id="cd01031">
    <property type="entry name" value="EriC"/>
    <property type="match status" value="1"/>
</dbReference>
<dbReference type="FunFam" id="1.10.3080.10:FF:000005">
    <property type="entry name" value="H(+)/Cl(-) exchange transporter ClcA"/>
    <property type="match status" value="1"/>
</dbReference>
<dbReference type="Gene3D" id="1.10.3080.10">
    <property type="entry name" value="Clc chloride channel"/>
    <property type="match status" value="1"/>
</dbReference>
<dbReference type="HAMAP" id="MF_01128">
    <property type="entry name" value="CLC_ClcA"/>
    <property type="match status" value="1"/>
</dbReference>
<dbReference type="InterPro" id="IPR023861">
    <property type="entry name" value="Cl-channel_ClcA"/>
</dbReference>
<dbReference type="InterPro" id="IPR014743">
    <property type="entry name" value="Cl-channel_core"/>
</dbReference>
<dbReference type="InterPro" id="IPR001807">
    <property type="entry name" value="ClC"/>
</dbReference>
<dbReference type="NCBIfam" id="NF003640">
    <property type="entry name" value="PRK05277.1"/>
    <property type="match status" value="1"/>
</dbReference>
<dbReference type="PANTHER" id="PTHR45711">
    <property type="entry name" value="CHLORIDE CHANNEL PROTEIN"/>
    <property type="match status" value="1"/>
</dbReference>
<dbReference type="PANTHER" id="PTHR45711:SF6">
    <property type="entry name" value="CHLORIDE CHANNEL PROTEIN"/>
    <property type="match status" value="1"/>
</dbReference>
<dbReference type="Pfam" id="PF00654">
    <property type="entry name" value="Voltage_CLC"/>
    <property type="match status" value="1"/>
</dbReference>
<dbReference type="PRINTS" id="PR00762">
    <property type="entry name" value="CLCHANNEL"/>
</dbReference>
<dbReference type="SUPFAM" id="SSF81340">
    <property type="entry name" value="Clc chloride channel"/>
    <property type="match status" value="1"/>
</dbReference>
<sequence>MKTDTSTFLAQQIVRLRRRDQIRRLMQRDKTPLAILFMAAVVGTLTGLVGVAFEKAVSWVQNMRIGALVQVADHAFLLWPLAFILSALLAMVGYFLVRKFAPEAGGSGIPEIEGALEELRPVRWWRVLPVKFIGGMGTLGAGMVLGREGPTVQIGGNLGRMVLDVFRMRSAEARHTLLATGAAAGLSAAFNAPLAGILFIIEEMRPQFRYNLISIKAVFTGVIMSSIVFRIFNGEAPIIEVGKLSDAPVNTLWLYLILGIIFGCVGPVFNSLVLRTQDMFQRFHGGEIKKWVLMGGAIGGLCGILGLIEPEAAGGGFNLIPIAAAGNFSVGLLLFIFITRVVTTLLCFSSGAPGGIFAPMLALGTLLGTAFGMAAAVLFPQYHLEAGTFAIAGMGALMAASVRAPLTGIVLVLEMTDNYQLILPMIITCLGATLLAQFLGGKPLYSTILARTLAKQDAEQAAKNQNASAGENT</sequence>
<gene>
    <name evidence="1" type="primary">clcA</name>
    <name evidence="1" type="synonym">eriC</name>
    <name type="ordered locus">SPC_0219</name>
</gene>
<evidence type="ECO:0000255" key="1">
    <source>
        <dbReference type="HAMAP-Rule" id="MF_01128"/>
    </source>
</evidence>
<proteinExistence type="inferred from homology"/>
<comment type="function">
    <text evidence="1">Proton-coupled chloride transporter. Functions as antiport system and exchanges two chloride ions for 1 proton. Probably acts as an electrical shunt for an outwardly-directed proton pump that is linked to amino acid decarboxylation, as part of the extreme acid resistance (XAR) response.</text>
</comment>
<comment type="catalytic activity">
    <reaction evidence="1">
        <text>2 chloride(in) + H(+)(out) = 2 chloride(out) + H(+)(in)</text>
        <dbReference type="Rhea" id="RHEA:29567"/>
        <dbReference type="ChEBI" id="CHEBI:15378"/>
        <dbReference type="ChEBI" id="CHEBI:17996"/>
    </reaction>
</comment>
<comment type="subunit">
    <text evidence="1">Homodimer.</text>
</comment>
<comment type="subcellular location">
    <subcellularLocation>
        <location evidence="1">Cell inner membrane</location>
        <topology evidence="1">Multi-pass membrane protein</topology>
    </subcellularLocation>
</comment>
<comment type="similarity">
    <text evidence="1">Belongs to the chloride channel (TC 2.A.49) family. ClcA subfamily.</text>
</comment>
<protein>
    <recommendedName>
        <fullName evidence="1">H(+)/Cl(-) exchange transporter ClcA</fullName>
    </recommendedName>
</protein>
<accession>C0Q5R6</accession>